<name>RL5_CLOBA</name>
<sequence>MTRLQEKYSKEVIPAMIEKFGYKNVMEIPKLEKIVINMGVGEAKENQKVLESAVSDLSLIAGQKPILTRAKKSVANFKIRENMALGCKVTLRKAKMYEFADKLMSIALPRVRDFRGVSAKAFDGRGNYSLGIKEQLIFPEIEYDKIDKVRGMDIIFVTTANTDEEARELLRFLGMPFAQ</sequence>
<reference key="1">
    <citation type="submission" date="2008-05" db="EMBL/GenBank/DDBJ databases">
        <title>Complete genome sequence of Clostridium botulinum E3 str. Alaska E43.</title>
        <authorList>
            <person name="Brinkac L.M."/>
            <person name="Brown J.L."/>
            <person name="Bruce D."/>
            <person name="Detter C."/>
            <person name="Munk C."/>
            <person name="Smith L.A."/>
            <person name="Smith T.J."/>
            <person name="Sutton G."/>
            <person name="Brettin T.S."/>
        </authorList>
    </citation>
    <scope>NUCLEOTIDE SEQUENCE [LARGE SCALE GENOMIC DNA]</scope>
    <source>
        <strain>Alaska E43 / Type E3</strain>
    </source>
</reference>
<organism>
    <name type="scientific">Clostridium botulinum (strain Alaska E43 / Type E3)</name>
    <dbReference type="NCBI Taxonomy" id="508767"/>
    <lineage>
        <taxon>Bacteria</taxon>
        <taxon>Bacillati</taxon>
        <taxon>Bacillota</taxon>
        <taxon>Clostridia</taxon>
        <taxon>Eubacteriales</taxon>
        <taxon>Clostridiaceae</taxon>
        <taxon>Clostridium</taxon>
    </lineage>
</organism>
<proteinExistence type="inferred from homology"/>
<protein>
    <recommendedName>
        <fullName evidence="1">Large ribosomal subunit protein uL5</fullName>
    </recommendedName>
    <alternativeName>
        <fullName evidence="2">50S ribosomal protein L5</fullName>
    </alternativeName>
</protein>
<comment type="function">
    <text evidence="1">This is one of the proteins that bind and probably mediate the attachment of the 5S RNA into the large ribosomal subunit, where it forms part of the central protuberance. In the 70S ribosome it contacts protein S13 of the 30S subunit (bridge B1b), connecting the 2 subunits; this bridge is implicated in subunit movement. Contacts the P site tRNA; the 5S rRNA and some of its associated proteins might help stabilize positioning of ribosome-bound tRNAs.</text>
</comment>
<comment type="subunit">
    <text evidence="1">Part of the 50S ribosomal subunit; part of the 5S rRNA/L5/L18/L25 subcomplex. Contacts the 5S rRNA and the P site tRNA. Forms a bridge to the 30S subunit in the 70S ribosome.</text>
</comment>
<comment type="similarity">
    <text evidence="1">Belongs to the universal ribosomal protein uL5 family.</text>
</comment>
<gene>
    <name evidence="1" type="primary">rplE</name>
    <name type="ordered locus">CLH_0249</name>
</gene>
<accession>B2UYC2</accession>
<keyword id="KW-0687">Ribonucleoprotein</keyword>
<keyword id="KW-0689">Ribosomal protein</keyword>
<keyword id="KW-0694">RNA-binding</keyword>
<keyword id="KW-0699">rRNA-binding</keyword>
<keyword id="KW-0820">tRNA-binding</keyword>
<feature type="chain" id="PRO_1000142375" description="Large ribosomal subunit protein uL5">
    <location>
        <begin position="1"/>
        <end position="179"/>
    </location>
</feature>
<evidence type="ECO:0000255" key="1">
    <source>
        <dbReference type="HAMAP-Rule" id="MF_01333"/>
    </source>
</evidence>
<evidence type="ECO:0000305" key="2"/>
<dbReference type="EMBL" id="CP001078">
    <property type="protein sequence ID" value="ACD53825.1"/>
    <property type="molecule type" value="Genomic_DNA"/>
</dbReference>
<dbReference type="RefSeq" id="WP_003374539.1">
    <property type="nucleotide sequence ID" value="NC_010723.1"/>
</dbReference>
<dbReference type="SMR" id="B2UYC2"/>
<dbReference type="KEGG" id="cbt:CLH_0249"/>
<dbReference type="HOGENOM" id="CLU_061015_2_1_9"/>
<dbReference type="GO" id="GO:1990904">
    <property type="term" value="C:ribonucleoprotein complex"/>
    <property type="evidence" value="ECO:0007669"/>
    <property type="project" value="UniProtKB-KW"/>
</dbReference>
<dbReference type="GO" id="GO:0005840">
    <property type="term" value="C:ribosome"/>
    <property type="evidence" value="ECO:0007669"/>
    <property type="project" value="UniProtKB-KW"/>
</dbReference>
<dbReference type="GO" id="GO:0019843">
    <property type="term" value="F:rRNA binding"/>
    <property type="evidence" value="ECO:0007669"/>
    <property type="project" value="UniProtKB-UniRule"/>
</dbReference>
<dbReference type="GO" id="GO:0003735">
    <property type="term" value="F:structural constituent of ribosome"/>
    <property type="evidence" value="ECO:0007669"/>
    <property type="project" value="InterPro"/>
</dbReference>
<dbReference type="GO" id="GO:0000049">
    <property type="term" value="F:tRNA binding"/>
    <property type="evidence" value="ECO:0007669"/>
    <property type="project" value="UniProtKB-UniRule"/>
</dbReference>
<dbReference type="GO" id="GO:0006412">
    <property type="term" value="P:translation"/>
    <property type="evidence" value="ECO:0007669"/>
    <property type="project" value="UniProtKB-UniRule"/>
</dbReference>
<dbReference type="FunFam" id="3.30.1440.10:FF:000001">
    <property type="entry name" value="50S ribosomal protein L5"/>
    <property type="match status" value="1"/>
</dbReference>
<dbReference type="Gene3D" id="3.30.1440.10">
    <property type="match status" value="1"/>
</dbReference>
<dbReference type="HAMAP" id="MF_01333_B">
    <property type="entry name" value="Ribosomal_uL5_B"/>
    <property type="match status" value="1"/>
</dbReference>
<dbReference type="InterPro" id="IPR002132">
    <property type="entry name" value="Ribosomal_uL5"/>
</dbReference>
<dbReference type="InterPro" id="IPR020930">
    <property type="entry name" value="Ribosomal_uL5_bac-type"/>
</dbReference>
<dbReference type="InterPro" id="IPR031309">
    <property type="entry name" value="Ribosomal_uL5_C"/>
</dbReference>
<dbReference type="InterPro" id="IPR020929">
    <property type="entry name" value="Ribosomal_uL5_CS"/>
</dbReference>
<dbReference type="InterPro" id="IPR022803">
    <property type="entry name" value="Ribosomal_uL5_dom_sf"/>
</dbReference>
<dbReference type="InterPro" id="IPR031310">
    <property type="entry name" value="Ribosomal_uL5_N"/>
</dbReference>
<dbReference type="NCBIfam" id="NF000585">
    <property type="entry name" value="PRK00010.1"/>
    <property type="match status" value="1"/>
</dbReference>
<dbReference type="PANTHER" id="PTHR11994">
    <property type="entry name" value="60S RIBOSOMAL PROTEIN L11-RELATED"/>
    <property type="match status" value="1"/>
</dbReference>
<dbReference type="Pfam" id="PF00281">
    <property type="entry name" value="Ribosomal_L5"/>
    <property type="match status" value="1"/>
</dbReference>
<dbReference type="Pfam" id="PF00673">
    <property type="entry name" value="Ribosomal_L5_C"/>
    <property type="match status" value="1"/>
</dbReference>
<dbReference type="PIRSF" id="PIRSF002161">
    <property type="entry name" value="Ribosomal_L5"/>
    <property type="match status" value="1"/>
</dbReference>
<dbReference type="SUPFAM" id="SSF55282">
    <property type="entry name" value="RL5-like"/>
    <property type="match status" value="1"/>
</dbReference>
<dbReference type="PROSITE" id="PS00358">
    <property type="entry name" value="RIBOSOMAL_L5"/>
    <property type="match status" value="1"/>
</dbReference>